<dbReference type="EMBL" id="CH933808">
    <property type="protein sequence ID" value="EDW09568.1"/>
    <property type="molecule type" value="Genomic_DNA"/>
</dbReference>
<dbReference type="SMR" id="B4KT48"/>
<dbReference type="FunCoup" id="B4KT48">
    <property type="interactions" value="2002"/>
</dbReference>
<dbReference type="EnsemblMetazoa" id="FBtr0171298">
    <property type="protein sequence ID" value="FBpp0169790"/>
    <property type="gene ID" value="FBgn0143309"/>
</dbReference>
<dbReference type="EnsemblMetazoa" id="FBtr0425980">
    <property type="protein sequence ID" value="FBpp0383700"/>
    <property type="gene ID" value="FBgn0143309"/>
</dbReference>
<dbReference type="EnsemblMetazoa" id="FBtr0431413">
    <property type="protein sequence ID" value="FBpp0388696"/>
    <property type="gene ID" value="FBgn0143309"/>
</dbReference>
<dbReference type="EnsemblMetazoa" id="XM_002005597.4">
    <property type="protein sequence ID" value="XP_002005633.1"/>
    <property type="gene ID" value="LOC6579751"/>
</dbReference>
<dbReference type="EnsemblMetazoa" id="XM_015163854.3">
    <property type="protein sequence ID" value="XP_015019340.1"/>
    <property type="gene ID" value="LOC6579751"/>
</dbReference>
<dbReference type="EnsemblMetazoa" id="XM_015163855.3">
    <property type="protein sequence ID" value="XP_015019341.1"/>
    <property type="gene ID" value="LOC6579751"/>
</dbReference>
<dbReference type="GeneID" id="6579751"/>
<dbReference type="KEGG" id="dmo:Dmoj_GI20573"/>
<dbReference type="CTD" id="36791"/>
<dbReference type="eggNOG" id="KOG0295">
    <property type="taxonomic scope" value="Eukaryota"/>
</dbReference>
<dbReference type="HOGENOM" id="CLU_000288_57_15_1"/>
<dbReference type="InParanoid" id="B4KT48"/>
<dbReference type="OMA" id="WHVATKE"/>
<dbReference type="OrthoDB" id="674604at2759"/>
<dbReference type="PhylomeDB" id="B4KT48"/>
<dbReference type="Proteomes" id="UP000009192">
    <property type="component" value="Unassembled WGS sequence"/>
</dbReference>
<dbReference type="GO" id="GO:1904115">
    <property type="term" value="C:axon cytoplasm"/>
    <property type="evidence" value="ECO:0007669"/>
    <property type="project" value="GOC"/>
</dbReference>
<dbReference type="GO" id="GO:0005938">
    <property type="term" value="C:cell cortex"/>
    <property type="evidence" value="ECO:0007669"/>
    <property type="project" value="EnsemblMetazoa"/>
</dbReference>
<dbReference type="GO" id="GO:0030425">
    <property type="term" value="C:dendrite"/>
    <property type="evidence" value="ECO:0007669"/>
    <property type="project" value="EnsemblMetazoa"/>
</dbReference>
<dbReference type="GO" id="GO:0005869">
    <property type="term" value="C:dynactin complex"/>
    <property type="evidence" value="ECO:0007669"/>
    <property type="project" value="EnsemblMetazoa"/>
</dbReference>
<dbReference type="GO" id="GO:0030286">
    <property type="term" value="C:dynein complex"/>
    <property type="evidence" value="ECO:0007669"/>
    <property type="project" value="EnsemblMetazoa"/>
</dbReference>
<dbReference type="GO" id="GO:0030426">
    <property type="term" value="C:growth cone"/>
    <property type="evidence" value="ECO:0007669"/>
    <property type="project" value="EnsemblMetazoa"/>
</dbReference>
<dbReference type="GO" id="GO:0000776">
    <property type="term" value="C:kinetochore"/>
    <property type="evidence" value="ECO:0007669"/>
    <property type="project" value="EnsemblMetazoa"/>
</dbReference>
<dbReference type="GO" id="GO:0005828">
    <property type="term" value="C:kinetochore microtubule"/>
    <property type="evidence" value="ECO:0007669"/>
    <property type="project" value="EnsemblMetazoa"/>
</dbReference>
<dbReference type="GO" id="GO:0043025">
    <property type="term" value="C:neuronal cell body"/>
    <property type="evidence" value="ECO:0007669"/>
    <property type="project" value="EnsemblMetazoa"/>
</dbReference>
<dbReference type="GO" id="GO:0031616">
    <property type="term" value="C:spindle pole centrosome"/>
    <property type="evidence" value="ECO:0007669"/>
    <property type="project" value="EnsemblMetazoa"/>
</dbReference>
<dbReference type="GO" id="GO:0070840">
    <property type="term" value="F:dynein complex binding"/>
    <property type="evidence" value="ECO:0007669"/>
    <property type="project" value="UniProtKB-UniRule"/>
</dbReference>
<dbReference type="GO" id="GO:0007298">
    <property type="term" value="P:border follicle cell migration"/>
    <property type="evidence" value="ECO:0007669"/>
    <property type="project" value="EnsemblMetazoa"/>
</dbReference>
<dbReference type="GO" id="GO:0051642">
    <property type="term" value="P:centrosome localization"/>
    <property type="evidence" value="ECO:0007669"/>
    <property type="project" value="EnsemblMetazoa"/>
</dbReference>
<dbReference type="GO" id="GO:0051299">
    <property type="term" value="P:centrosome separation"/>
    <property type="evidence" value="ECO:0007669"/>
    <property type="project" value="EnsemblMetazoa"/>
</dbReference>
<dbReference type="GO" id="GO:0030381">
    <property type="term" value="P:chorion-containing eggshell pattern formation"/>
    <property type="evidence" value="ECO:0007669"/>
    <property type="project" value="EnsemblMetazoa"/>
</dbReference>
<dbReference type="GO" id="GO:0061883">
    <property type="term" value="P:clathrin-dependent endocytosis involved in vitellogenesis"/>
    <property type="evidence" value="ECO:0007669"/>
    <property type="project" value="EnsemblMetazoa"/>
</dbReference>
<dbReference type="GO" id="GO:0048813">
    <property type="term" value="P:dendrite morphogenesis"/>
    <property type="evidence" value="ECO:0007669"/>
    <property type="project" value="EnsemblMetazoa"/>
</dbReference>
<dbReference type="GO" id="GO:0000132">
    <property type="term" value="P:establishment of mitotic spindle orientation"/>
    <property type="evidence" value="ECO:0007669"/>
    <property type="project" value="UniProtKB-UniRule"/>
</dbReference>
<dbReference type="GO" id="GO:0048142">
    <property type="term" value="P:germarium-derived cystoblast division"/>
    <property type="evidence" value="ECO:0007669"/>
    <property type="project" value="EnsemblMetazoa"/>
</dbReference>
<dbReference type="GO" id="GO:0007294">
    <property type="term" value="P:germarium-derived oocyte fate determination"/>
    <property type="evidence" value="ECO:0007669"/>
    <property type="project" value="EnsemblMetazoa"/>
</dbReference>
<dbReference type="GO" id="GO:0008298">
    <property type="term" value="P:intracellular mRNA localization"/>
    <property type="evidence" value="ECO:0007669"/>
    <property type="project" value="EnsemblMetazoa"/>
</dbReference>
<dbReference type="GO" id="GO:0006886">
    <property type="term" value="P:intracellular protein transport"/>
    <property type="evidence" value="ECO:0007669"/>
    <property type="project" value="EnsemblMetazoa"/>
</dbReference>
<dbReference type="GO" id="GO:0051383">
    <property type="term" value="P:kinetochore organization"/>
    <property type="evidence" value="ECO:0007669"/>
    <property type="project" value="EnsemblMetazoa"/>
</dbReference>
<dbReference type="GO" id="GO:0051012">
    <property type="term" value="P:microtubule sliding"/>
    <property type="evidence" value="ECO:0007669"/>
    <property type="project" value="UniProtKB-UniRule"/>
</dbReference>
<dbReference type="GO" id="GO:0046716">
    <property type="term" value="P:muscle cell cellular homeostasis"/>
    <property type="evidence" value="ECO:0007669"/>
    <property type="project" value="EnsemblMetazoa"/>
</dbReference>
<dbReference type="GO" id="GO:0016319">
    <property type="term" value="P:mushroom body development"/>
    <property type="evidence" value="ECO:0007669"/>
    <property type="project" value="EnsemblMetazoa"/>
</dbReference>
<dbReference type="GO" id="GO:0007405">
    <property type="term" value="P:neuroblast proliferation"/>
    <property type="evidence" value="ECO:0007669"/>
    <property type="project" value="EnsemblMetazoa"/>
</dbReference>
<dbReference type="GO" id="GO:0030473">
    <property type="term" value="P:nuclear migration along microtubule"/>
    <property type="evidence" value="ECO:0007669"/>
    <property type="project" value="EnsemblMetazoa"/>
</dbReference>
<dbReference type="GO" id="GO:0007312">
    <property type="term" value="P:oocyte nucleus migration involved in oocyte dorsal/ventral axis specification"/>
    <property type="evidence" value="ECO:0007669"/>
    <property type="project" value="EnsemblMetazoa"/>
</dbReference>
<dbReference type="GO" id="GO:0030723">
    <property type="term" value="P:ovarian fusome organization"/>
    <property type="evidence" value="ECO:0007669"/>
    <property type="project" value="EnsemblMetazoa"/>
</dbReference>
<dbReference type="GO" id="GO:0007300">
    <property type="term" value="P:ovarian nurse cell to oocyte transport"/>
    <property type="evidence" value="ECO:0007669"/>
    <property type="project" value="EnsemblMetazoa"/>
</dbReference>
<dbReference type="GO" id="GO:0072499">
    <property type="term" value="P:photoreceptor cell axon guidance"/>
    <property type="evidence" value="ECO:0007669"/>
    <property type="project" value="EnsemblMetazoa"/>
</dbReference>
<dbReference type="GO" id="GO:0050772">
    <property type="term" value="P:positive regulation of axonogenesis"/>
    <property type="evidence" value="ECO:0007669"/>
    <property type="project" value="EnsemblMetazoa"/>
</dbReference>
<dbReference type="GO" id="GO:0030513">
    <property type="term" value="P:positive regulation of BMP signaling pathway"/>
    <property type="evidence" value="ECO:0007669"/>
    <property type="project" value="EnsemblMetazoa"/>
</dbReference>
<dbReference type="GO" id="GO:0045842">
    <property type="term" value="P:positive regulation of mitotic metaphase/anaphase transition"/>
    <property type="evidence" value="ECO:0007669"/>
    <property type="project" value="EnsemblMetazoa"/>
</dbReference>
<dbReference type="GO" id="GO:0034501">
    <property type="term" value="P:protein localization to kinetochore"/>
    <property type="evidence" value="ECO:0007669"/>
    <property type="project" value="EnsemblMetazoa"/>
</dbReference>
<dbReference type="GO" id="GO:0048814">
    <property type="term" value="P:regulation of dendrite morphogenesis"/>
    <property type="evidence" value="ECO:0007669"/>
    <property type="project" value="EnsemblMetazoa"/>
</dbReference>
<dbReference type="GO" id="GO:0008090">
    <property type="term" value="P:retrograde axonal transport"/>
    <property type="evidence" value="ECO:0007669"/>
    <property type="project" value="EnsemblMetazoa"/>
</dbReference>
<dbReference type="GO" id="GO:0042052">
    <property type="term" value="P:rhabdomere development"/>
    <property type="evidence" value="ECO:0007669"/>
    <property type="project" value="EnsemblMetazoa"/>
</dbReference>
<dbReference type="GO" id="GO:0007283">
    <property type="term" value="P:spermatogenesis"/>
    <property type="evidence" value="ECO:0007669"/>
    <property type="project" value="EnsemblMetazoa"/>
</dbReference>
<dbReference type="GO" id="GO:0051225">
    <property type="term" value="P:spindle assembly"/>
    <property type="evidence" value="ECO:0007669"/>
    <property type="project" value="EnsemblMetazoa"/>
</dbReference>
<dbReference type="GO" id="GO:0019827">
    <property type="term" value="P:stem cell population maintenance"/>
    <property type="evidence" value="ECO:0007669"/>
    <property type="project" value="EnsemblMetazoa"/>
</dbReference>
<dbReference type="CDD" id="cd00200">
    <property type="entry name" value="WD40"/>
    <property type="match status" value="1"/>
</dbReference>
<dbReference type="FunFam" id="2.130.10.10:FF:000038">
    <property type="entry name" value="Lissencephaly-1 homolog B"/>
    <property type="match status" value="1"/>
</dbReference>
<dbReference type="FunFam" id="1.20.960.30:FF:000002">
    <property type="entry name" value="Platelet-activating factor acetylhydrolase ib"/>
    <property type="match status" value="1"/>
</dbReference>
<dbReference type="Gene3D" id="1.20.960.30">
    <property type="match status" value="1"/>
</dbReference>
<dbReference type="Gene3D" id="2.130.10.10">
    <property type="entry name" value="YVTN repeat-like/Quinoprotein amine dehydrogenase"/>
    <property type="match status" value="1"/>
</dbReference>
<dbReference type="HAMAP" id="MF_03141">
    <property type="entry name" value="lis1"/>
    <property type="match status" value="1"/>
</dbReference>
<dbReference type="InterPro" id="IPR017252">
    <property type="entry name" value="Dynein_regulator_LIS1"/>
</dbReference>
<dbReference type="InterPro" id="IPR020472">
    <property type="entry name" value="G-protein_beta_WD-40_rep"/>
</dbReference>
<dbReference type="InterPro" id="IPR037190">
    <property type="entry name" value="LIS1_N"/>
</dbReference>
<dbReference type="InterPro" id="IPR006594">
    <property type="entry name" value="LisH"/>
</dbReference>
<dbReference type="InterPro" id="IPR056795">
    <property type="entry name" value="PAC1-like_LisH-like_dom"/>
</dbReference>
<dbReference type="InterPro" id="IPR015943">
    <property type="entry name" value="WD40/YVTN_repeat-like_dom_sf"/>
</dbReference>
<dbReference type="InterPro" id="IPR019775">
    <property type="entry name" value="WD40_repeat_CS"/>
</dbReference>
<dbReference type="InterPro" id="IPR036322">
    <property type="entry name" value="WD40_repeat_dom_sf"/>
</dbReference>
<dbReference type="InterPro" id="IPR001680">
    <property type="entry name" value="WD40_rpt"/>
</dbReference>
<dbReference type="InterPro" id="IPR050349">
    <property type="entry name" value="WD_LIS1/nudF_dynein_reg"/>
</dbReference>
<dbReference type="PANTHER" id="PTHR44129">
    <property type="entry name" value="WD REPEAT-CONTAINING PROTEIN POP1"/>
    <property type="match status" value="1"/>
</dbReference>
<dbReference type="Pfam" id="PF24951">
    <property type="entry name" value="LisH_PAC1"/>
    <property type="match status" value="1"/>
</dbReference>
<dbReference type="Pfam" id="PF00400">
    <property type="entry name" value="WD40"/>
    <property type="match status" value="7"/>
</dbReference>
<dbReference type="PIRSF" id="PIRSF037647">
    <property type="entry name" value="Dynein_regulator_Lis1"/>
    <property type="match status" value="1"/>
</dbReference>
<dbReference type="PRINTS" id="PR00320">
    <property type="entry name" value="GPROTEINBRPT"/>
</dbReference>
<dbReference type="SMART" id="SM00667">
    <property type="entry name" value="LisH"/>
    <property type="match status" value="1"/>
</dbReference>
<dbReference type="SMART" id="SM00320">
    <property type="entry name" value="WD40"/>
    <property type="match status" value="7"/>
</dbReference>
<dbReference type="SUPFAM" id="SSF109925">
    <property type="entry name" value="Lissencephaly-1 protein (Lis-1, PAF-AH alpha) N-terminal domain"/>
    <property type="match status" value="1"/>
</dbReference>
<dbReference type="SUPFAM" id="SSF50978">
    <property type="entry name" value="WD40 repeat-like"/>
    <property type="match status" value="1"/>
</dbReference>
<dbReference type="PROSITE" id="PS50896">
    <property type="entry name" value="LISH"/>
    <property type="match status" value="1"/>
</dbReference>
<dbReference type="PROSITE" id="PS00678">
    <property type="entry name" value="WD_REPEATS_1"/>
    <property type="match status" value="6"/>
</dbReference>
<dbReference type="PROSITE" id="PS50082">
    <property type="entry name" value="WD_REPEATS_2"/>
    <property type="match status" value="7"/>
</dbReference>
<dbReference type="PROSITE" id="PS50294">
    <property type="entry name" value="WD_REPEATS_REGION"/>
    <property type="match status" value="1"/>
</dbReference>
<proteinExistence type="inferred from homology"/>
<name>LIS1_DROMO</name>
<organism>
    <name type="scientific">Drosophila mojavensis</name>
    <name type="common">Fruit fly</name>
    <dbReference type="NCBI Taxonomy" id="7230"/>
    <lineage>
        <taxon>Eukaryota</taxon>
        <taxon>Metazoa</taxon>
        <taxon>Ecdysozoa</taxon>
        <taxon>Arthropoda</taxon>
        <taxon>Hexapoda</taxon>
        <taxon>Insecta</taxon>
        <taxon>Pterygota</taxon>
        <taxon>Neoptera</taxon>
        <taxon>Endopterygota</taxon>
        <taxon>Diptera</taxon>
        <taxon>Brachycera</taxon>
        <taxon>Muscomorpha</taxon>
        <taxon>Ephydroidea</taxon>
        <taxon>Drosophilidae</taxon>
        <taxon>Drosophila</taxon>
    </lineage>
</organism>
<comment type="function">
    <text evidence="1">Positively regulates the activity of the minus-end directed microtubule motor protein dynein. May enhance dynein-mediated microtubule sliding by targeting dynein to the microtubule plus end. Required for several dynein- and microtubule-dependent processes.</text>
</comment>
<comment type="subcellular location">
    <subcellularLocation>
        <location evidence="1">Cytoplasm</location>
        <location evidence="1">Cytoskeleton</location>
    </subcellularLocation>
    <subcellularLocation>
        <location evidence="1">Cytoplasm</location>
        <location evidence="1">Cytoskeleton</location>
        <location evidence="1">Microtubule organizing center</location>
        <location evidence="1">Centrosome</location>
    </subcellularLocation>
    <text evidence="1">Localizes to the plus end of microtubules and to the centrosome.</text>
</comment>
<comment type="domain">
    <text evidence="1">Dimerization mediated by the LisH domain may be required to activate dynein.</text>
</comment>
<comment type="similarity">
    <text evidence="1">Belongs to the WD repeat LIS1/nudF family.</text>
</comment>
<reference key="1">
    <citation type="journal article" date="2007" name="Nature">
        <title>Evolution of genes and genomes on the Drosophila phylogeny.</title>
        <authorList>
            <consortium name="Drosophila 12 genomes consortium"/>
        </authorList>
    </citation>
    <scope>NUCLEOTIDE SEQUENCE [LARGE SCALE GENOMIC DNA]</scope>
    <source>
        <strain>Tucson 15081-1352.22</strain>
    </source>
</reference>
<gene>
    <name evidence="1" type="primary">Lis-1</name>
    <name type="ORF">GI20573</name>
</gene>
<evidence type="ECO:0000255" key="1">
    <source>
        <dbReference type="HAMAP-Rule" id="MF_03141"/>
    </source>
</evidence>
<accession>B4KT48</accession>
<feature type="chain" id="PRO_0000405043" description="Lissencephaly-1 homolog">
    <location>
        <begin position="1"/>
        <end position="411"/>
    </location>
</feature>
<feature type="domain" description="LisH" evidence="1">
    <location>
        <begin position="9"/>
        <end position="41"/>
    </location>
</feature>
<feature type="repeat" description="WD 1">
    <location>
        <begin position="106"/>
        <end position="147"/>
    </location>
</feature>
<feature type="repeat" description="WD 2">
    <location>
        <begin position="148"/>
        <end position="187"/>
    </location>
</feature>
<feature type="repeat" description="WD 3">
    <location>
        <begin position="191"/>
        <end position="230"/>
    </location>
</feature>
<feature type="repeat" description="WD 4">
    <location>
        <begin position="233"/>
        <end position="272"/>
    </location>
</feature>
<feature type="repeat" description="WD 5">
    <location>
        <begin position="275"/>
        <end position="334"/>
    </location>
</feature>
<feature type="repeat" description="WD 6">
    <location>
        <begin position="337"/>
        <end position="376"/>
    </location>
</feature>
<feature type="repeat" description="WD 7">
    <location>
        <begin position="379"/>
        <end position="411"/>
    </location>
</feature>
<feature type="coiled-coil region" evidence="1">
    <location>
        <begin position="56"/>
        <end position="83"/>
    </location>
</feature>
<keyword id="KW-0131">Cell cycle</keyword>
<keyword id="KW-0132">Cell division</keyword>
<keyword id="KW-0175">Coiled coil</keyword>
<keyword id="KW-0963">Cytoplasm</keyword>
<keyword id="KW-0206">Cytoskeleton</keyword>
<keyword id="KW-0493">Microtubule</keyword>
<keyword id="KW-0498">Mitosis</keyword>
<keyword id="KW-1185">Reference proteome</keyword>
<keyword id="KW-0677">Repeat</keyword>
<keyword id="KW-0813">Transport</keyword>
<keyword id="KW-0853">WD repeat</keyword>
<protein>
    <recommendedName>
        <fullName evidence="1">Lissencephaly-1 homolog</fullName>
    </recommendedName>
</protein>
<sequence>MKMVLSQRQREELNQAIADYLGSNGYADSLETFRKEADLSTESEKKYGGLLEKKWTSVIRLQKKVMDLEAKLTEAEKEVIEGAPTKNKRTPGEWIPRPPEKYSLTGHRASITRVIFHPIFGLMVSASEDATIKIWDFETGEYERSLKGHTDSVQDVAFDAQGKLLASCSADLSIKLWDFQQSYECVKTMHGHDHNVSSVAFVPAGDYVLSASRDRTIKMWEVATGYCVKTYTGHREWVRMVRVHIEGSIFATCSNDHTIRVWLTNSKDCKVELRDHEHTVECIAWAPEAAASAINEAAGADNKKGHHQGPFLASGSRDKTIRIWDVSVGLCLLTLNGHDNWVRGLAFHPGGKYLVSASDDKTIRVWDLRNKRCMKTLYAHQHFCTSIDFHKAHPYVISGSVDQSVKVWECR</sequence>